<proteinExistence type="inferred from homology"/>
<evidence type="ECO:0000250" key="1"/>
<evidence type="ECO:0000255" key="2"/>
<evidence type="ECO:0000305" key="3"/>
<protein>
    <recommendedName>
        <fullName>Quinolone resistance protein NorB</fullName>
    </recommendedName>
</protein>
<organism>
    <name type="scientific">Staphylococcus aureus (strain COL)</name>
    <dbReference type="NCBI Taxonomy" id="93062"/>
    <lineage>
        <taxon>Bacteria</taxon>
        <taxon>Bacillati</taxon>
        <taxon>Bacillota</taxon>
        <taxon>Bacilli</taxon>
        <taxon>Bacillales</taxon>
        <taxon>Staphylococcaceae</taxon>
        <taxon>Staphylococcus</taxon>
    </lineage>
</organism>
<gene>
    <name type="primary">norB</name>
    <name type="ordered locus">SACOL1475</name>
</gene>
<reference key="1">
    <citation type="journal article" date="2005" name="J. Bacteriol.">
        <title>Insights on evolution of virulence and resistance from the complete genome analysis of an early methicillin-resistant Staphylococcus aureus strain and a biofilm-producing methicillin-resistant Staphylococcus epidermidis strain.</title>
        <authorList>
            <person name="Gill S.R."/>
            <person name="Fouts D.E."/>
            <person name="Archer G.L."/>
            <person name="Mongodin E.F."/>
            <person name="DeBoy R.T."/>
            <person name="Ravel J."/>
            <person name="Paulsen I.T."/>
            <person name="Kolonay J.F."/>
            <person name="Brinkac L.M."/>
            <person name="Beanan M.J."/>
            <person name="Dodson R.J."/>
            <person name="Daugherty S.C."/>
            <person name="Madupu R."/>
            <person name="Angiuoli S.V."/>
            <person name="Durkin A.S."/>
            <person name="Haft D.H."/>
            <person name="Vamathevan J.J."/>
            <person name="Khouri H."/>
            <person name="Utterback T.R."/>
            <person name="Lee C."/>
            <person name="Dimitrov G."/>
            <person name="Jiang L."/>
            <person name="Qin H."/>
            <person name="Weidman J."/>
            <person name="Tran K."/>
            <person name="Kang K.H."/>
            <person name="Hance I.R."/>
            <person name="Nelson K.E."/>
            <person name="Fraser C.M."/>
        </authorList>
    </citation>
    <scope>NUCLEOTIDE SEQUENCE [LARGE SCALE GENOMIC DNA]</scope>
    <source>
        <strain>COL</strain>
    </source>
</reference>
<feature type="chain" id="PRO_0000361955" description="Quinolone resistance protein NorB">
    <location>
        <begin position="1"/>
        <end position="463"/>
    </location>
</feature>
<feature type="transmembrane region" description="Helical" evidence="2">
    <location>
        <begin position="17"/>
        <end position="37"/>
    </location>
</feature>
<feature type="transmembrane region" description="Helical" evidence="2">
    <location>
        <begin position="53"/>
        <end position="73"/>
    </location>
</feature>
<feature type="transmembrane region" description="Helical" evidence="2">
    <location>
        <begin position="86"/>
        <end position="106"/>
    </location>
</feature>
<feature type="transmembrane region" description="Helical" evidence="2">
    <location>
        <begin position="107"/>
        <end position="127"/>
    </location>
</feature>
<feature type="transmembrane region" description="Helical" evidence="2">
    <location>
        <begin position="142"/>
        <end position="162"/>
    </location>
</feature>
<feature type="transmembrane region" description="Helical" evidence="2">
    <location>
        <begin position="165"/>
        <end position="185"/>
    </location>
</feature>
<feature type="transmembrane region" description="Helical" evidence="2">
    <location>
        <begin position="201"/>
        <end position="221"/>
    </location>
</feature>
<feature type="transmembrane region" description="Helical" evidence="2">
    <location>
        <begin position="230"/>
        <end position="250"/>
    </location>
</feature>
<feature type="transmembrane region" description="Helical" evidence="2">
    <location>
        <begin position="273"/>
        <end position="293"/>
    </location>
</feature>
<feature type="transmembrane region" description="Helical" evidence="2">
    <location>
        <begin position="299"/>
        <end position="319"/>
    </location>
</feature>
<feature type="transmembrane region" description="Helical" evidence="2">
    <location>
        <begin position="334"/>
        <end position="354"/>
    </location>
</feature>
<feature type="transmembrane region" description="Helical" evidence="2">
    <location>
        <begin position="357"/>
        <end position="377"/>
    </location>
</feature>
<feature type="transmembrane region" description="Helical" evidence="2">
    <location>
        <begin position="403"/>
        <end position="423"/>
    </location>
</feature>
<feature type="transmembrane region" description="Helical" evidence="2">
    <location>
        <begin position="435"/>
        <end position="455"/>
    </location>
</feature>
<name>NORB_STAAC</name>
<comment type="function">
    <text evidence="1">Multidrug efflux pump that acts independently of NorA and is one of the factors that confers resistance against diverse quinolones and chemical compounds.</text>
</comment>
<comment type="subcellular location">
    <subcellularLocation>
        <location evidence="3">Cell membrane</location>
        <topology evidence="3">Multi-pass membrane protein</topology>
    </subcellularLocation>
</comment>
<comment type="similarity">
    <text evidence="3">Belongs to the major facilitator superfamily. TCR/Tet family.</text>
</comment>
<sequence>MEKPSREAFEGNNKLLIGIVLSVITFWLFAQSLVNVVPILEDSFNTDIGTVNIAVSITALFSGMFVVGAGGLADKYGRIKLTNIGIILNILGSLLIIISNIPLLLIIGRLIQGLSAACIMPATLSIIKSYYIGKDRQRALSYWSIGSWGGSGVCSFFGGAVATLLGWRWIFILSIIISLIALFLIKGTPETKSKSISLNKFDIKGLVLLVIMLLSLNILITKGSELGVTSLLFITLLAIAIGSFSLFIVLEKRATNPLIDFKLFKNKAYTGATASNFLLNGVAGTLIVANTFVQRGLGYSSLQAGSLSITYLVMVLIMIRVGEKLLQTLGCKKPMLIGTGVLIVGECLISLTFLPEIFYVICCIIGYLFFGLGLGIYATPSTDTAIANAPLEKVGVAAGIYKMASALGGAFGVALSGAVYAIVSNMTNIYTGAMIALWLNAAMGILSFVIILLLVPKQNDTQL</sequence>
<dbReference type="EMBL" id="CP000046">
    <property type="protein sequence ID" value="AAW36671.1"/>
    <property type="molecule type" value="Genomic_DNA"/>
</dbReference>
<dbReference type="RefSeq" id="WP_000414684.1">
    <property type="nucleotide sequence ID" value="NZ_JBGOFO010000003.1"/>
</dbReference>
<dbReference type="SMR" id="Q5HFY7"/>
<dbReference type="KEGG" id="sac:SACOL1475"/>
<dbReference type="HOGENOM" id="CLU_000960_28_3_9"/>
<dbReference type="Proteomes" id="UP000000530">
    <property type="component" value="Chromosome"/>
</dbReference>
<dbReference type="GO" id="GO:0005886">
    <property type="term" value="C:plasma membrane"/>
    <property type="evidence" value="ECO:0007669"/>
    <property type="project" value="UniProtKB-SubCell"/>
</dbReference>
<dbReference type="GO" id="GO:0022857">
    <property type="term" value="F:transmembrane transporter activity"/>
    <property type="evidence" value="ECO:0007669"/>
    <property type="project" value="InterPro"/>
</dbReference>
<dbReference type="GO" id="GO:0046677">
    <property type="term" value="P:response to antibiotic"/>
    <property type="evidence" value="ECO:0007669"/>
    <property type="project" value="UniProtKB-KW"/>
</dbReference>
<dbReference type="CDD" id="cd17321">
    <property type="entry name" value="MFS_MMR_MDR_like"/>
    <property type="match status" value="1"/>
</dbReference>
<dbReference type="FunFam" id="1.20.1250.20:FF:000252">
    <property type="entry name" value="Quinolone resistance protein NorB"/>
    <property type="match status" value="1"/>
</dbReference>
<dbReference type="FunFam" id="1.20.1720.10:FF:000015">
    <property type="entry name" value="Quinolone resistance protein NorB"/>
    <property type="match status" value="1"/>
</dbReference>
<dbReference type="Gene3D" id="1.20.1250.20">
    <property type="entry name" value="MFS general substrate transporter like domains"/>
    <property type="match status" value="1"/>
</dbReference>
<dbReference type="Gene3D" id="1.20.1720.10">
    <property type="entry name" value="Multidrug resistance protein D"/>
    <property type="match status" value="1"/>
</dbReference>
<dbReference type="InterPro" id="IPR011701">
    <property type="entry name" value="MFS"/>
</dbReference>
<dbReference type="InterPro" id="IPR020846">
    <property type="entry name" value="MFS_dom"/>
</dbReference>
<dbReference type="InterPro" id="IPR036259">
    <property type="entry name" value="MFS_trans_sf"/>
</dbReference>
<dbReference type="PANTHER" id="PTHR42718">
    <property type="entry name" value="MAJOR FACILITATOR SUPERFAMILY MULTIDRUG TRANSPORTER MFSC"/>
    <property type="match status" value="1"/>
</dbReference>
<dbReference type="PANTHER" id="PTHR42718:SF9">
    <property type="entry name" value="MAJOR FACILITATOR SUPERFAMILY MULTIDRUG TRANSPORTER MFSC"/>
    <property type="match status" value="1"/>
</dbReference>
<dbReference type="Pfam" id="PF07690">
    <property type="entry name" value="MFS_1"/>
    <property type="match status" value="1"/>
</dbReference>
<dbReference type="SUPFAM" id="SSF103473">
    <property type="entry name" value="MFS general substrate transporter"/>
    <property type="match status" value="1"/>
</dbReference>
<dbReference type="PROSITE" id="PS50850">
    <property type="entry name" value="MFS"/>
    <property type="match status" value="1"/>
</dbReference>
<accession>Q5HFY7</accession>
<keyword id="KW-0046">Antibiotic resistance</keyword>
<keyword id="KW-1003">Cell membrane</keyword>
<keyword id="KW-0472">Membrane</keyword>
<keyword id="KW-0812">Transmembrane</keyword>
<keyword id="KW-1133">Transmembrane helix</keyword>
<keyword id="KW-0813">Transport</keyword>